<sequence length="17" mass="1870">GFADLFGKAVDFIKSRV</sequence>
<proteinExistence type="evidence at protein level"/>
<keyword id="KW-0027">Amidation</keyword>
<keyword id="KW-0878">Amphibian defense peptide</keyword>
<keyword id="KW-0903">Direct protein sequencing</keyword>
<keyword id="KW-0964">Secreted</keyword>
<organism>
    <name type="scientific">Crinia signifera</name>
    <name type="common">Common eastern froglet</name>
    <dbReference type="NCBI Taxonomy" id="326986"/>
    <lineage>
        <taxon>Eukaryota</taxon>
        <taxon>Metazoa</taxon>
        <taxon>Chordata</taxon>
        <taxon>Craniata</taxon>
        <taxon>Vertebrata</taxon>
        <taxon>Euteleostomi</taxon>
        <taxon>Amphibia</taxon>
        <taxon>Batrachia</taxon>
        <taxon>Anura</taxon>
        <taxon>Neobatrachia</taxon>
        <taxon>Myobatrachoidea</taxon>
        <taxon>Myobatrachidae</taxon>
        <taxon>Myobatrachinae</taxon>
        <taxon>Crinia</taxon>
    </lineage>
</organism>
<comment type="function">
    <text evidence="2 3">Inhibits the formation of NO by neuronal nitric oxide synthase with an IC(50) of 40 ug/ml.</text>
</comment>
<comment type="subcellular location">
    <subcellularLocation>
        <location evidence="1">Secreted</location>
    </subcellularLocation>
</comment>
<comment type="tissue specificity">
    <text evidence="1">Expressed by the skin glands.</text>
</comment>
<accession>P86122</accession>
<evidence type="ECO:0000269" key="1">
    <source>
    </source>
</evidence>
<evidence type="ECO:0000269" key="2">
    <source>
    </source>
</evidence>
<evidence type="ECO:0000269" key="3">
    <source>
    </source>
</evidence>
<evidence type="ECO:0000305" key="4"/>
<name>SIG43_CRISI</name>
<reference evidence="4" key="1">
    <citation type="journal article" date="2004" name="Rapid Commun. Mass Spectrom.">
        <title>Host-defence skin peptides of the Australian common froglet Crinia signifera: sequence determination using positive and negative ion electrospray mass spectra.</title>
        <authorList>
            <person name="Maselli V.M."/>
            <person name="Brinkworth C.S."/>
            <person name="Bowie J.H."/>
            <person name="Tyler M.J."/>
        </authorList>
    </citation>
    <scope>PROTEIN SEQUENCE</scope>
    <scope>SUBCELLULAR LOCATION</scope>
    <scope>TISSUE SPECIFICITY</scope>
    <scope>AMIDATION AT VAL-17</scope>
    <source>
        <tissue evidence="1">Skin secretion</tissue>
    </source>
</reference>
<reference evidence="4" key="2">
    <citation type="journal article" date="2006" name="Rapid Commun. Mass Spectrom.">
        <title>Host-defence skin peptides of the Australian streambank froglet Crinia riparia: isolation and sequence determination by positive and negative ion electrospray mass spectrometry.</title>
        <authorList>
            <person name="Maselli V.M."/>
            <person name="Bilusich D."/>
            <person name="Bowie J.H."/>
            <person name="Tyler M.J."/>
        </authorList>
    </citation>
    <scope>FUNCTION</scope>
</reference>
<reference evidence="4" key="3">
    <citation type="journal article" date="2008" name="Regul. Pept.">
        <title>Disulfide-containing peptides from the glandular skin secretions of froglets of the genus Crinia: structure, activity and evolutionary trends.</title>
        <authorList>
            <person name="Jackway R.J."/>
            <person name="Pukala T.L."/>
            <person name="Maselli V.M."/>
            <person name="Musgrave I.F."/>
            <person name="Bowie J.H."/>
            <person name="Liu Y."/>
            <person name="Surinya-Johnson K.H."/>
            <person name="Donnellan S.C."/>
            <person name="Doyle J.R."/>
            <person name="Llewellyn L.E."/>
            <person name="Tyler M.J."/>
        </authorList>
    </citation>
    <scope>FUNCTION</scope>
    <scope>DISCUSSION OF SEQUENCE</scope>
</reference>
<feature type="peptide" id="PRO_0000371746" description="Signiferin-4.3">
    <location>
        <begin position="1"/>
        <end position="17"/>
    </location>
</feature>
<feature type="modified residue" description="Valine amide" evidence="1">
    <location>
        <position position="17"/>
    </location>
</feature>
<dbReference type="GO" id="GO:0005576">
    <property type="term" value="C:extracellular region"/>
    <property type="evidence" value="ECO:0000314"/>
    <property type="project" value="UniProtKB"/>
</dbReference>
<dbReference type="GO" id="GO:0006952">
    <property type="term" value="P:defense response"/>
    <property type="evidence" value="ECO:0007669"/>
    <property type="project" value="UniProtKB-KW"/>
</dbReference>
<dbReference type="GO" id="GO:0051001">
    <property type="term" value="P:negative regulation of nitric-oxide synthase activity"/>
    <property type="evidence" value="ECO:0000314"/>
    <property type="project" value="UniProtKB"/>
</dbReference>
<protein>
    <recommendedName>
        <fullName>Signiferin-4.3</fullName>
    </recommendedName>
</protein>